<gene>
    <name evidence="1" type="primary">dapH</name>
    <name type="ordered locus">LCABL_00990</name>
</gene>
<accession>B3W7E7</accession>
<proteinExistence type="inferred from homology"/>
<feature type="chain" id="PRO_0000376663" description="2,3,4,5-tetrahydropyridine-2,6-dicarboxylate N-acetyltransferase">
    <location>
        <begin position="1"/>
        <end position="234"/>
    </location>
</feature>
<reference key="1">
    <citation type="submission" date="2008-06" db="EMBL/GenBank/DDBJ databases">
        <title>Lactobacillus casei BL23 complete genome sequence.</title>
        <authorList>
            <person name="Maze A."/>
            <person name="Boel G."/>
            <person name="Bourand A."/>
            <person name="Loux V."/>
            <person name="Gibrat J.F."/>
            <person name="Zuniga M."/>
            <person name="Hartke A."/>
            <person name="Deutscher J."/>
        </authorList>
    </citation>
    <scope>NUCLEOTIDE SEQUENCE [LARGE SCALE GENOMIC DNA]</scope>
    <source>
        <strain>BL23</strain>
    </source>
</reference>
<keyword id="KW-0012">Acyltransferase</keyword>
<keyword id="KW-0028">Amino-acid biosynthesis</keyword>
<keyword id="KW-0220">Diaminopimelate biosynthesis</keyword>
<keyword id="KW-0457">Lysine biosynthesis</keyword>
<keyword id="KW-0677">Repeat</keyword>
<keyword id="KW-0808">Transferase</keyword>
<evidence type="ECO:0000255" key="1">
    <source>
        <dbReference type="HAMAP-Rule" id="MF_01691"/>
    </source>
</evidence>
<sequence length="234" mass="24264">MAQLDTQKIISTIANSKKTTPVKVYLKGKLSELHFPKSVHAFIGKHTGTVIGDWAEIKPILKKAKLDDYYVETAGRNTGVPLLDIKAANARIEPGAIIRDQVLIGDNAVIMMGAIINIGAEIGAGTMIDMGAVLGGRAIVGKHCHIGAGTVLAGVVEPPSAKPVTIGDHVMIGANAVVLEGTTVGEGAVIAAGAVVINDVPAHTVVAGVPAKVIKQVNDQTEAKTVLLDELRKL</sequence>
<dbReference type="EC" id="2.3.1.89" evidence="1"/>
<dbReference type="EMBL" id="FM177140">
    <property type="protein sequence ID" value="CAQ65231.1"/>
    <property type="molecule type" value="Genomic_DNA"/>
</dbReference>
<dbReference type="SMR" id="B3W7E7"/>
<dbReference type="KEGG" id="lcb:LCABL_00990"/>
<dbReference type="HOGENOM" id="CLU_103751_0_0_9"/>
<dbReference type="UniPathway" id="UPA00034">
    <property type="reaction ID" value="UER00022"/>
</dbReference>
<dbReference type="GO" id="GO:0047200">
    <property type="term" value="F:tetrahydrodipicolinate N-acetyltransferase activity"/>
    <property type="evidence" value="ECO:0007669"/>
    <property type="project" value="UniProtKB-EC"/>
</dbReference>
<dbReference type="GO" id="GO:0019877">
    <property type="term" value="P:diaminopimelate biosynthetic process"/>
    <property type="evidence" value="ECO:0007669"/>
    <property type="project" value="UniProtKB-UniRule"/>
</dbReference>
<dbReference type="GO" id="GO:0009089">
    <property type="term" value="P:lysine biosynthetic process via diaminopimelate"/>
    <property type="evidence" value="ECO:0007669"/>
    <property type="project" value="UniProtKB-UniRule"/>
</dbReference>
<dbReference type="CDD" id="cd03350">
    <property type="entry name" value="LbH_THP_succinylT"/>
    <property type="match status" value="1"/>
</dbReference>
<dbReference type="Gene3D" id="2.160.10.10">
    <property type="entry name" value="Hexapeptide repeat proteins"/>
    <property type="match status" value="1"/>
</dbReference>
<dbReference type="Gene3D" id="3.30.70.250">
    <property type="entry name" value="Malonyl-CoA ACP transacylase, ACP-binding"/>
    <property type="match status" value="1"/>
</dbReference>
<dbReference type="HAMAP" id="MF_01691">
    <property type="entry name" value="DapH"/>
    <property type="match status" value="1"/>
</dbReference>
<dbReference type="InterPro" id="IPR019873">
    <property type="entry name" value="DapH"/>
</dbReference>
<dbReference type="InterPro" id="IPR013710">
    <property type="entry name" value="DapH_N"/>
</dbReference>
<dbReference type="InterPro" id="IPR001451">
    <property type="entry name" value="Hexapep"/>
</dbReference>
<dbReference type="InterPro" id="IPR050179">
    <property type="entry name" value="Trans_hexapeptide_repeat"/>
</dbReference>
<dbReference type="InterPro" id="IPR011004">
    <property type="entry name" value="Trimer_LpxA-like_sf"/>
</dbReference>
<dbReference type="NCBIfam" id="TIGR03532">
    <property type="entry name" value="DapD_Ac"/>
    <property type="match status" value="1"/>
</dbReference>
<dbReference type="PANTHER" id="PTHR43300:SF10">
    <property type="entry name" value="2,3,4,5-TETRAHYDROPYRIDINE-2,6-DICARBOXYLATE N-ACETYLTRANSFERASE"/>
    <property type="match status" value="1"/>
</dbReference>
<dbReference type="PANTHER" id="PTHR43300">
    <property type="entry name" value="ACETYLTRANSFERASE"/>
    <property type="match status" value="1"/>
</dbReference>
<dbReference type="Pfam" id="PF08503">
    <property type="entry name" value="DapH_N"/>
    <property type="match status" value="1"/>
</dbReference>
<dbReference type="Pfam" id="PF00132">
    <property type="entry name" value="Hexapep"/>
    <property type="match status" value="1"/>
</dbReference>
<dbReference type="Pfam" id="PF14602">
    <property type="entry name" value="Hexapep_2"/>
    <property type="match status" value="1"/>
</dbReference>
<dbReference type="SUPFAM" id="SSF51161">
    <property type="entry name" value="Trimeric LpxA-like enzymes"/>
    <property type="match status" value="1"/>
</dbReference>
<name>DAPH_LACCB</name>
<organism>
    <name type="scientific">Lacticaseibacillus casei (strain BL23)</name>
    <name type="common">Lactobacillus casei</name>
    <dbReference type="NCBI Taxonomy" id="543734"/>
    <lineage>
        <taxon>Bacteria</taxon>
        <taxon>Bacillati</taxon>
        <taxon>Bacillota</taxon>
        <taxon>Bacilli</taxon>
        <taxon>Lactobacillales</taxon>
        <taxon>Lactobacillaceae</taxon>
        <taxon>Lacticaseibacillus</taxon>
    </lineage>
</organism>
<protein>
    <recommendedName>
        <fullName evidence="1">2,3,4,5-tetrahydropyridine-2,6-dicarboxylate N-acetyltransferase</fullName>
        <ecNumber evidence="1">2.3.1.89</ecNumber>
    </recommendedName>
    <alternativeName>
        <fullName evidence="1">Tetrahydrodipicolinate N-acetyltransferase</fullName>
        <shortName evidence="1">THP acetyltransferase</shortName>
        <shortName evidence="1">Tetrahydropicolinate acetylase</shortName>
    </alternativeName>
</protein>
<comment type="function">
    <text evidence="1">Catalyzes the transfer of an acetyl group from acetyl-CoA to tetrahydrodipicolinate.</text>
</comment>
<comment type="catalytic activity">
    <reaction evidence="1">
        <text>(S)-2,3,4,5-tetrahydrodipicolinate + acetyl-CoA + H2O = L-2-acetamido-6-oxoheptanedioate + CoA</text>
        <dbReference type="Rhea" id="RHEA:13085"/>
        <dbReference type="ChEBI" id="CHEBI:15377"/>
        <dbReference type="ChEBI" id="CHEBI:16845"/>
        <dbReference type="ChEBI" id="CHEBI:57287"/>
        <dbReference type="ChEBI" id="CHEBI:57288"/>
        <dbReference type="ChEBI" id="CHEBI:58117"/>
        <dbReference type="EC" id="2.3.1.89"/>
    </reaction>
</comment>
<comment type="pathway">
    <text evidence="1">Amino-acid biosynthesis; L-lysine biosynthesis via DAP pathway; LL-2,6-diaminopimelate from (S)-tetrahydrodipicolinate (acetylase route): step 1/3.</text>
</comment>
<comment type="similarity">
    <text evidence="1">Belongs to the transferase hexapeptide repeat family. DapH subfamily.</text>
</comment>